<comment type="function">
    <text evidence="1">Functions as an activating and costimulatory receptor involved in immunosurveillance upon binding to various cellular stress-inducible ligands displayed at the surface of autologous tumor cells and virus-infected cells. Provides both stimulatory and costimulatory innate immune responses on activated killer (NK) cells, leading to cytotoxic activity. Acts as a costimulatory receptor for T-cell receptor (TCR) in CD8(+) T-cell-mediated adaptive immune responses by amplifying T-cell activation. Stimulates perforin-mediated elimination of ligand-expressing tumor cells. Signaling involves calcium influx, culminating in the expression of TNF-alpha. Participates in NK cell-mediated bone marrow graft rejection. May play a regulatory role in differentiation and survival of NK cells. Binds to ligands belonging to various subfamilies of MHC class I-related glycoproteins (By similarity).</text>
</comment>
<comment type="subunit">
    <text evidence="1 2">Homodimer; disulfide-linked. Heterohexamer composed of two subunits of KLRK1 and four subunits of HCST/DAP10. Interacts (via transmembrane domain) with HCST/DAP10 (via transmembrane domain); the interaction is required for KLRK1 NK cell surface and induces NK cell-mediated cytotoxicity. Can form disulfide-bonded heterodimer with CD94 (By similarity). Interacts with CEACAM1; recruits PTPN6 that dephosphorylates VAV1 (By similarity).</text>
</comment>
<comment type="subcellular location">
    <subcellularLocation>
        <location evidence="1">Cell membrane</location>
        <topology evidence="1">Single-pass type II membrane protein</topology>
    </subcellularLocation>
    <text evidence="1">Colocalized with HCST on the cell surface.</text>
</comment>
<comment type="alternative products">
    <event type="alternative splicing"/>
    <isoform>
        <id>Q9GLF5-1</id>
        <name>1</name>
        <sequence type="displayed"/>
    </isoform>
    <isoform>
        <id>Q9GLF5-2</id>
        <name>2</name>
        <name>Truncated</name>
        <sequence type="described" ref="VSP_022793 VSP_022794"/>
    </isoform>
</comment>
<comment type="tissue specificity">
    <text evidence="5">Detected in peripheral blood leukocytes, macrophages, monocytes and natural killer cells.</text>
</comment>
<comment type="miscellaneous">
    <text evidence="1">Is not capable of signal transduction by itself, but operates through the adapter protein HCST.</text>
</comment>
<name>NKG2D_PIG</name>
<gene>
    <name type="primary">KLRK1</name>
    <name type="synonym">NKG2D</name>
</gene>
<reference key="1">
    <citation type="journal article" date="2001" name="Immunogenetics">
        <title>Molecular cloning and characterization of pig immunoreceptor DAP10 and NKG2D.</title>
        <authorList>
            <person name="Yim D."/>
            <person name="Jie H.-B."/>
            <person name="Sotiriadis J."/>
            <person name="Kim Y.-S."/>
            <person name="Kim K.-S."/>
            <person name="Rothschild M.F."/>
            <person name="Lanier L.L."/>
            <person name="Kim Y.B."/>
        </authorList>
    </citation>
    <scope>NUCLEOTIDE SEQUENCE [MRNA] (ISOFORMS 1 AND 2)</scope>
    <scope>TISSUE SPECIFICITY</scope>
</reference>
<proteinExistence type="evidence at transcript level"/>
<organism>
    <name type="scientific">Sus scrofa</name>
    <name type="common">Pig</name>
    <dbReference type="NCBI Taxonomy" id="9823"/>
    <lineage>
        <taxon>Eukaryota</taxon>
        <taxon>Metazoa</taxon>
        <taxon>Chordata</taxon>
        <taxon>Craniata</taxon>
        <taxon>Vertebrata</taxon>
        <taxon>Euteleostomi</taxon>
        <taxon>Mammalia</taxon>
        <taxon>Eutheria</taxon>
        <taxon>Laurasiatheria</taxon>
        <taxon>Artiodactyla</taxon>
        <taxon>Suina</taxon>
        <taxon>Suidae</taxon>
        <taxon>Sus</taxon>
    </lineage>
</organism>
<keyword id="KW-1064">Adaptive immunity</keyword>
<keyword id="KW-0025">Alternative splicing</keyword>
<keyword id="KW-1003">Cell membrane</keyword>
<keyword id="KW-0221">Differentiation</keyword>
<keyword id="KW-1015">Disulfide bond</keyword>
<keyword id="KW-0325">Glycoprotein</keyword>
<keyword id="KW-0391">Immunity</keyword>
<keyword id="KW-0399">Innate immunity</keyword>
<keyword id="KW-0430">Lectin</keyword>
<keyword id="KW-0472">Membrane</keyword>
<keyword id="KW-0675">Receptor</keyword>
<keyword id="KW-1185">Reference proteome</keyword>
<keyword id="KW-0735">Signal-anchor</keyword>
<keyword id="KW-0812">Transmembrane</keyword>
<keyword id="KW-1133">Transmembrane helix</keyword>
<accession>Q9GLF5</accession>
<accession>Q9GL58</accession>
<protein>
    <recommendedName>
        <fullName>NKG2-D type II integral membrane protein</fullName>
    </recommendedName>
    <alternativeName>
        <fullName>Killer cell lectin-like receptor subfamily K member 1</fullName>
    </alternativeName>
    <alternativeName>
        <fullName>NK cell receptor D</fullName>
    </alternativeName>
    <alternativeName>
        <fullName>NKG2-D-activating NK receptor</fullName>
    </alternativeName>
    <cdAntigenName>CD314</cdAntigenName>
</protein>
<sequence length="214" mass="24773">MGWIRDRRSPSSMEIRELHNRDVINRGAFKSRQKRTQTLITSKCGENPSPFFLARSIAIAMGIRFIVMVMIYSGMIINLLFNQEAPSPLKESYCGPCPKNWICYRNSCYQFSNESKTWLQSQASCRSQNSSLLKIYSREDQDFFKLVKSYHWMGLVQIPTNRSWQWEDGSILSPNQITMVEMQNGSCAVYGSSFKGYTENCLTLNTYICMKRTV</sequence>
<evidence type="ECO:0000250" key="1"/>
<evidence type="ECO:0000250" key="2">
    <source>
        <dbReference type="UniProtKB" id="P26718"/>
    </source>
</evidence>
<evidence type="ECO:0000255" key="3"/>
<evidence type="ECO:0000255" key="4">
    <source>
        <dbReference type="PROSITE-ProRule" id="PRU00040"/>
    </source>
</evidence>
<evidence type="ECO:0000269" key="5">
    <source>
    </source>
</evidence>
<evidence type="ECO:0000303" key="6">
    <source>
    </source>
</evidence>
<evidence type="ECO:0000305" key="7"/>
<dbReference type="EMBL" id="AF285448">
    <property type="protein sequence ID" value="AAG29426.1"/>
    <property type="molecule type" value="mRNA"/>
</dbReference>
<dbReference type="EMBL" id="AF313487">
    <property type="protein sequence ID" value="AAG33631.1"/>
    <property type="molecule type" value="mRNA"/>
</dbReference>
<dbReference type="RefSeq" id="NP_998978.2">
    <molecule id="Q9GLF5-1"/>
    <property type="nucleotide sequence ID" value="NM_213813.2"/>
</dbReference>
<dbReference type="SMR" id="Q9GLF5"/>
<dbReference type="FunCoup" id="Q9GLF5">
    <property type="interactions" value="137"/>
</dbReference>
<dbReference type="STRING" id="9823.ENSSSCP00000034632"/>
<dbReference type="GlyCosmos" id="Q9GLF5">
    <property type="glycosylation" value="4 sites, No reported glycans"/>
</dbReference>
<dbReference type="GlyGen" id="Q9GLF5">
    <property type="glycosylation" value="4 sites"/>
</dbReference>
<dbReference type="PaxDb" id="9823-ENSSSCP00000000676"/>
<dbReference type="GeneID" id="396737"/>
<dbReference type="KEGG" id="ssc:396737"/>
<dbReference type="CTD" id="22914"/>
<dbReference type="eggNOG" id="KOG4297">
    <property type="taxonomic scope" value="Eukaryota"/>
</dbReference>
<dbReference type="InParanoid" id="Q9GLF5"/>
<dbReference type="OrthoDB" id="2142683at2759"/>
<dbReference type="Proteomes" id="UP000008227">
    <property type="component" value="Unplaced"/>
</dbReference>
<dbReference type="Proteomes" id="UP000314985">
    <property type="component" value="Unplaced"/>
</dbReference>
<dbReference type="Proteomes" id="UP000694570">
    <property type="component" value="Unplaced"/>
</dbReference>
<dbReference type="Proteomes" id="UP000694571">
    <property type="component" value="Unplaced"/>
</dbReference>
<dbReference type="Proteomes" id="UP000694720">
    <property type="component" value="Unplaced"/>
</dbReference>
<dbReference type="Proteomes" id="UP000694722">
    <property type="component" value="Unplaced"/>
</dbReference>
<dbReference type="Proteomes" id="UP000694723">
    <property type="component" value="Unplaced"/>
</dbReference>
<dbReference type="Proteomes" id="UP000694724">
    <property type="component" value="Unplaced"/>
</dbReference>
<dbReference type="Proteomes" id="UP000694725">
    <property type="component" value="Unplaced"/>
</dbReference>
<dbReference type="Proteomes" id="UP000694726">
    <property type="component" value="Unplaced"/>
</dbReference>
<dbReference type="Proteomes" id="UP000694727">
    <property type="component" value="Unplaced"/>
</dbReference>
<dbReference type="Proteomes" id="UP000694728">
    <property type="component" value="Unplaced"/>
</dbReference>
<dbReference type="GO" id="GO:0009986">
    <property type="term" value="C:cell surface"/>
    <property type="evidence" value="ECO:0000250"/>
    <property type="project" value="UniProtKB"/>
</dbReference>
<dbReference type="GO" id="GO:0009897">
    <property type="term" value="C:external side of plasma membrane"/>
    <property type="evidence" value="ECO:0000318"/>
    <property type="project" value="GO_Central"/>
</dbReference>
<dbReference type="GO" id="GO:0030246">
    <property type="term" value="F:carbohydrate binding"/>
    <property type="evidence" value="ECO:0007669"/>
    <property type="project" value="UniProtKB-KW"/>
</dbReference>
<dbReference type="GO" id="GO:0038023">
    <property type="term" value="F:signaling receptor activity"/>
    <property type="evidence" value="ECO:0000318"/>
    <property type="project" value="GO_Central"/>
</dbReference>
<dbReference type="GO" id="GO:0002250">
    <property type="term" value="P:adaptive immune response"/>
    <property type="evidence" value="ECO:0007669"/>
    <property type="project" value="UniProtKB-KW"/>
</dbReference>
<dbReference type="GO" id="GO:0030154">
    <property type="term" value="P:cell differentiation"/>
    <property type="evidence" value="ECO:0007669"/>
    <property type="project" value="UniProtKB-KW"/>
</dbReference>
<dbReference type="GO" id="GO:0045087">
    <property type="term" value="P:innate immune response"/>
    <property type="evidence" value="ECO:0007669"/>
    <property type="project" value="UniProtKB-KW"/>
</dbReference>
<dbReference type="GO" id="GO:0045954">
    <property type="term" value="P:positive regulation of natural killer cell mediated cytotoxicity"/>
    <property type="evidence" value="ECO:0000250"/>
    <property type="project" value="UniProtKB"/>
</dbReference>
<dbReference type="CDD" id="cd03593">
    <property type="entry name" value="CLECT_NK_receptors_like"/>
    <property type="match status" value="1"/>
</dbReference>
<dbReference type="FunFam" id="3.10.100.10:FF:000055">
    <property type="entry name" value="NKG2-D type II integral membrane protein"/>
    <property type="match status" value="1"/>
</dbReference>
<dbReference type="Gene3D" id="3.10.100.10">
    <property type="entry name" value="Mannose-Binding Protein A, subunit A"/>
    <property type="match status" value="1"/>
</dbReference>
<dbReference type="InterPro" id="IPR001304">
    <property type="entry name" value="C-type_lectin-like"/>
</dbReference>
<dbReference type="InterPro" id="IPR016186">
    <property type="entry name" value="C-type_lectin-like/link_sf"/>
</dbReference>
<dbReference type="InterPro" id="IPR016187">
    <property type="entry name" value="CTDL_fold"/>
</dbReference>
<dbReference type="InterPro" id="IPR042169">
    <property type="entry name" value="NKG2D"/>
</dbReference>
<dbReference type="InterPro" id="IPR033992">
    <property type="entry name" value="NKR-like_CTLD"/>
</dbReference>
<dbReference type="PANTHER" id="PTHR47494">
    <property type="entry name" value="NKG2-D TYPE II INTEGRAL MEMBRANE PROTEIN"/>
    <property type="match status" value="1"/>
</dbReference>
<dbReference type="PANTHER" id="PTHR47494:SF1">
    <property type="entry name" value="NKG2-D TYPE II INTEGRAL MEMBRANE PROTEIN"/>
    <property type="match status" value="1"/>
</dbReference>
<dbReference type="Pfam" id="PF00059">
    <property type="entry name" value="Lectin_C"/>
    <property type="match status" value="1"/>
</dbReference>
<dbReference type="SMART" id="SM00034">
    <property type="entry name" value="CLECT"/>
    <property type="match status" value="1"/>
</dbReference>
<dbReference type="SUPFAM" id="SSF56436">
    <property type="entry name" value="C-type lectin-like"/>
    <property type="match status" value="1"/>
</dbReference>
<dbReference type="PROSITE" id="PS50041">
    <property type="entry name" value="C_TYPE_LECTIN_2"/>
    <property type="match status" value="1"/>
</dbReference>
<feature type="chain" id="PRO_0000274559" description="NKG2-D type II integral membrane protein">
    <location>
        <begin position="1"/>
        <end position="214"/>
    </location>
</feature>
<feature type="topological domain" description="Cytoplasmic" evidence="3">
    <location>
        <begin position="1"/>
        <end position="56"/>
    </location>
</feature>
<feature type="transmembrane region" description="Helical; Signal-anchor for type II membrane protein" evidence="3">
    <location>
        <begin position="57"/>
        <end position="77"/>
    </location>
</feature>
<feature type="topological domain" description="Extracellular" evidence="3">
    <location>
        <begin position="78"/>
        <end position="214"/>
    </location>
</feature>
<feature type="domain" description="C-type lectin" evidence="4">
    <location>
        <begin position="98"/>
        <end position="210"/>
    </location>
</feature>
<feature type="glycosylation site" description="N-linked (GlcNAc...) asparagine" evidence="3">
    <location>
        <position position="113"/>
    </location>
</feature>
<feature type="glycosylation site" description="N-linked (GlcNAc...) asparagine" evidence="3">
    <location>
        <position position="129"/>
    </location>
</feature>
<feature type="glycosylation site" description="N-linked (GlcNAc...) asparagine" evidence="3">
    <location>
        <position position="161"/>
    </location>
</feature>
<feature type="glycosylation site" description="N-linked (GlcNAc...) asparagine" evidence="3">
    <location>
        <position position="184"/>
    </location>
</feature>
<feature type="disulfide bond" evidence="4">
    <location>
        <begin position="94"/>
        <end position="103"/>
    </location>
</feature>
<feature type="disulfide bond" evidence="4">
    <location>
        <begin position="97"/>
        <end position="108"/>
    </location>
</feature>
<feature type="disulfide bond" evidence="4">
    <location>
        <begin position="125"/>
        <end position="209"/>
    </location>
</feature>
<feature type="disulfide bond" evidence="4">
    <location>
        <begin position="187"/>
        <end position="201"/>
    </location>
</feature>
<feature type="splice variant" id="VSP_022793" description="In isoform 2." evidence="6">
    <original>LL</original>
    <variation>CK</variation>
    <location>
        <begin position="79"/>
        <end position="80"/>
    </location>
</feature>
<feature type="splice variant" id="VSP_022794" description="In isoform 2." evidence="6">
    <location>
        <begin position="81"/>
        <end position="214"/>
    </location>
</feature>
<feature type="sequence conflict" description="In Ref. 1; AAG33631." evidence="7" ref="1">
    <original>D</original>
    <variation>G</variation>
    <location>
        <position position="6"/>
    </location>
</feature>